<keyword id="KW-0067">ATP-binding</keyword>
<keyword id="KW-0997">Cell inner membrane</keyword>
<keyword id="KW-1003">Cell membrane</keyword>
<keyword id="KW-0472">Membrane</keyword>
<keyword id="KW-0547">Nucleotide-binding</keyword>
<keyword id="KW-1185">Reference proteome</keyword>
<keyword id="KW-1278">Translocase</keyword>
<keyword id="KW-0813">Transport</keyword>
<feature type="chain" id="PRO_0000272075" description="Lipoprotein-releasing system ATP-binding protein LolD">
    <location>
        <begin position="1"/>
        <end position="224"/>
    </location>
</feature>
<feature type="domain" description="ABC transporter" evidence="1">
    <location>
        <begin position="4"/>
        <end position="224"/>
    </location>
</feature>
<feature type="binding site" evidence="1">
    <location>
        <begin position="40"/>
        <end position="47"/>
    </location>
    <ligand>
        <name>ATP</name>
        <dbReference type="ChEBI" id="CHEBI:30616"/>
    </ligand>
</feature>
<proteinExistence type="inferred from homology"/>
<name>LOLD_DESPS</name>
<gene>
    <name evidence="1" type="primary">lolD</name>
    <name type="ordered locus">DP1627</name>
</gene>
<organism>
    <name type="scientific">Desulfotalea psychrophila (strain LSv54 / DSM 12343)</name>
    <dbReference type="NCBI Taxonomy" id="177439"/>
    <lineage>
        <taxon>Bacteria</taxon>
        <taxon>Pseudomonadati</taxon>
        <taxon>Thermodesulfobacteriota</taxon>
        <taxon>Desulfobulbia</taxon>
        <taxon>Desulfobulbales</taxon>
        <taxon>Desulfocapsaceae</taxon>
        <taxon>Desulfotalea</taxon>
    </lineage>
</organism>
<protein>
    <recommendedName>
        <fullName evidence="1">Lipoprotein-releasing system ATP-binding protein LolD</fullName>
        <ecNumber evidence="1">7.6.2.-</ecNumber>
    </recommendedName>
</protein>
<sequence length="224" mass="24685">MTLYTAKDISKNYQSGDEILPVLKGINLSIEHSTMTAIVGASGSGKTTLLQILGTLTKPSSGKLYFKECAVDEKNERELAAFRNASLGFIFQFHHLLPEFTTLENVMMPALIGGKNNAESRANAEDLLRRVELHHRLEHKVTNLSGGEQQRTALARALIMNPAILLADEPTGNLDSRSGEIVFDLLKNLGQERQLATIMVTHNNELAARMDRCVTLLDGSLQEE</sequence>
<accession>Q6AMR9</accession>
<dbReference type="EC" id="7.6.2.-" evidence="1"/>
<dbReference type="EMBL" id="CR522870">
    <property type="protein sequence ID" value="CAG36356.1"/>
    <property type="molecule type" value="Genomic_DNA"/>
</dbReference>
<dbReference type="RefSeq" id="WP_011188868.1">
    <property type="nucleotide sequence ID" value="NC_006138.1"/>
</dbReference>
<dbReference type="SMR" id="Q6AMR9"/>
<dbReference type="STRING" id="177439.DP1627"/>
<dbReference type="KEGG" id="dps:DP1627"/>
<dbReference type="eggNOG" id="COG1136">
    <property type="taxonomic scope" value="Bacteria"/>
</dbReference>
<dbReference type="HOGENOM" id="CLU_000604_1_22_7"/>
<dbReference type="OrthoDB" id="9809450at2"/>
<dbReference type="Proteomes" id="UP000000602">
    <property type="component" value="Chromosome"/>
</dbReference>
<dbReference type="GO" id="GO:0005886">
    <property type="term" value="C:plasma membrane"/>
    <property type="evidence" value="ECO:0007669"/>
    <property type="project" value="UniProtKB-SubCell"/>
</dbReference>
<dbReference type="GO" id="GO:0005524">
    <property type="term" value="F:ATP binding"/>
    <property type="evidence" value="ECO:0007669"/>
    <property type="project" value="UniProtKB-KW"/>
</dbReference>
<dbReference type="GO" id="GO:0016887">
    <property type="term" value="F:ATP hydrolysis activity"/>
    <property type="evidence" value="ECO:0007669"/>
    <property type="project" value="InterPro"/>
</dbReference>
<dbReference type="CDD" id="cd03255">
    <property type="entry name" value="ABC_MJ0796_LolCDE_FtsE"/>
    <property type="match status" value="1"/>
</dbReference>
<dbReference type="FunFam" id="3.40.50.300:FF:000032">
    <property type="entry name" value="Export ABC transporter ATP-binding protein"/>
    <property type="match status" value="1"/>
</dbReference>
<dbReference type="Gene3D" id="3.40.50.300">
    <property type="entry name" value="P-loop containing nucleotide triphosphate hydrolases"/>
    <property type="match status" value="1"/>
</dbReference>
<dbReference type="InterPro" id="IPR003593">
    <property type="entry name" value="AAA+_ATPase"/>
</dbReference>
<dbReference type="InterPro" id="IPR003439">
    <property type="entry name" value="ABC_transporter-like_ATP-bd"/>
</dbReference>
<dbReference type="InterPro" id="IPR017911">
    <property type="entry name" value="MacB-like_ATP-bd"/>
</dbReference>
<dbReference type="InterPro" id="IPR027417">
    <property type="entry name" value="P-loop_NTPase"/>
</dbReference>
<dbReference type="PANTHER" id="PTHR42798:SF2">
    <property type="entry name" value="ABC TRANSPORTER ATP-BINDING PROTEIN MG467-RELATED"/>
    <property type="match status" value="1"/>
</dbReference>
<dbReference type="PANTHER" id="PTHR42798">
    <property type="entry name" value="LIPOPROTEIN-RELEASING SYSTEM ATP-BINDING PROTEIN LOLD"/>
    <property type="match status" value="1"/>
</dbReference>
<dbReference type="Pfam" id="PF00005">
    <property type="entry name" value="ABC_tran"/>
    <property type="match status" value="1"/>
</dbReference>
<dbReference type="SMART" id="SM00382">
    <property type="entry name" value="AAA"/>
    <property type="match status" value="1"/>
</dbReference>
<dbReference type="SUPFAM" id="SSF52540">
    <property type="entry name" value="P-loop containing nucleoside triphosphate hydrolases"/>
    <property type="match status" value="1"/>
</dbReference>
<dbReference type="PROSITE" id="PS50893">
    <property type="entry name" value="ABC_TRANSPORTER_2"/>
    <property type="match status" value="1"/>
</dbReference>
<dbReference type="PROSITE" id="PS51244">
    <property type="entry name" value="LOLD"/>
    <property type="match status" value="1"/>
</dbReference>
<reference key="1">
    <citation type="journal article" date="2004" name="Environ. Microbiol.">
        <title>The genome of Desulfotalea psychrophila, a sulfate-reducing bacterium from permanently cold Arctic sediments.</title>
        <authorList>
            <person name="Rabus R."/>
            <person name="Ruepp A."/>
            <person name="Frickey T."/>
            <person name="Rattei T."/>
            <person name="Fartmann B."/>
            <person name="Stark M."/>
            <person name="Bauer M."/>
            <person name="Zibat A."/>
            <person name="Lombardot T."/>
            <person name="Becker I."/>
            <person name="Amann J."/>
            <person name="Gellner K."/>
            <person name="Teeling H."/>
            <person name="Leuschner W.D."/>
            <person name="Gloeckner F.-O."/>
            <person name="Lupas A.N."/>
            <person name="Amann R."/>
            <person name="Klenk H.-P."/>
        </authorList>
    </citation>
    <scope>NUCLEOTIDE SEQUENCE [LARGE SCALE GENOMIC DNA]</scope>
    <source>
        <strain>DSM 12343 / LSv54</strain>
    </source>
</reference>
<evidence type="ECO:0000255" key="1">
    <source>
        <dbReference type="HAMAP-Rule" id="MF_01708"/>
    </source>
</evidence>
<comment type="function">
    <text evidence="1">Part of the ABC transporter complex LolCDE involved in the translocation of mature outer membrane-directed lipoproteins, from the inner membrane to the periplasmic chaperone, LolA. Responsible for the formation of the LolA-lipoprotein complex in an ATP-dependent manner.</text>
</comment>
<comment type="subunit">
    <text evidence="1">The complex is composed of two ATP-binding proteins (LolD) and two transmembrane proteins (LolC and LolE).</text>
</comment>
<comment type="subcellular location">
    <subcellularLocation>
        <location evidence="1">Cell inner membrane</location>
        <topology evidence="1">Peripheral membrane protein</topology>
    </subcellularLocation>
</comment>
<comment type="similarity">
    <text evidence="1">Belongs to the ABC transporter superfamily. Lipoprotein translocase (TC 3.A.1.125) family.</text>
</comment>